<sequence length="149" mass="17121">MAVKPSANLGKAFQLPHPFNSCVYIQIPPQPTWSINEYWERNPNKQYLDESDTTYLEELTLTPIEKHQALEKLNTIISAADRLQEVDTKNVDPMYTCVDEREMYMNSGQDGETVNKEEILGNAHKIFQDYFTAPTSEKMRSSSDLNAKE</sequence>
<reference key="1">
    <citation type="journal article" date="2008" name="Nature">
        <title>The Trichoplax genome and the nature of placozoans.</title>
        <authorList>
            <person name="Srivastava M."/>
            <person name="Begovic E."/>
            <person name="Chapman J."/>
            <person name="Putnam N.H."/>
            <person name="Hellsten U."/>
            <person name="Kawashima T."/>
            <person name="Kuo A."/>
            <person name="Mitros T."/>
            <person name="Salamov A."/>
            <person name="Carpenter M.L."/>
            <person name="Signorovitch A.Y."/>
            <person name="Moreno M.A."/>
            <person name="Kamm K."/>
            <person name="Grimwood J."/>
            <person name="Schmutz J."/>
            <person name="Shapiro H."/>
            <person name="Grigoriev I.V."/>
            <person name="Buss L.W."/>
            <person name="Schierwater B."/>
            <person name="Dellaporta S.L."/>
            <person name="Rokhsar D.S."/>
        </authorList>
    </citation>
    <scope>NUCLEOTIDE SEQUENCE [LARGE SCALE GENOMIC DNA]</scope>
    <source>
        <strain>Grell-BS-1999</strain>
    </source>
</reference>
<protein>
    <recommendedName>
        <fullName evidence="1">Glutamyl-tRNA(Gln) amidotransferase subunit C, mitochondrial</fullName>
        <shortName evidence="1">Glu-AdT subunit C</shortName>
        <ecNumber evidence="1">6.3.5.-</ecNumber>
    </recommendedName>
</protein>
<feature type="chain" id="PRO_0000413325" description="Glutamyl-tRNA(Gln) amidotransferase subunit C, mitochondrial">
    <location>
        <begin position="1"/>
        <end position="149"/>
    </location>
</feature>
<proteinExistence type="inferred from homology"/>
<comment type="function">
    <text evidence="1">Allows the formation of correctly charged Gln-tRNA(Gln) through the transamidation of misacylated Glu-tRNA(Gln) in the mitochondria. The reaction takes place in the presence of glutamine and ATP through an activated gamma-phospho-Glu-tRNA(Gln).</text>
</comment>
<comment type="catalytic activity">
    <reaction evidence="1">
        <text>L-glutamyl-tRNA(Gln) + L-glutamine + ATP + H2O = L-glutaminyl-tRNA(Gln) + L-glutamate + ADP + phosphate + H(+)</text>
        <dbReference type="Rhea" id="RHEA:17521"/>
        <dbReference type="Rhea" id="RHEA-COMP:9681"/>
        <dbReference type="Rhea" id="RHEA-COMP:9684"/>
        <dbReference type="ChEBI" id="CHEBI:15377"/>
        <dbReference type="ChEBI" id="CHEBI:15378"/>
        <dbReference type="ChEBI" id="CHEBI:29985"/>
        <dbReference type="ChEBI" id="CHEBI:30616"/>
        <dbReference type="ChEBI" id="CHEBI:43474"/>
        <dbReference type="ChEBI" id="CHEBI:58359"/>
        <dbReference type="ChEBI" id="CHEBI:78520"/>
        <dbReference type="ChEBI" id="CHEBI:78521"/>
        <dbReference type="ChEBI" id="CHEBI:456216"/>
    </reaction>
</comment>
<comment type="subunit">
    <text evidence="1">Subunit of the heterotrimeric GatCAB amidotransferase (AdT) complex, composed of A, B and C subunits.</text>
</comment>
<comment type="subcellular location">
    <subcellularLocation>
        <location evidence="1">Mitochondrion</location>
    </subcellularLocation>
</comment>
<comment type="miscellaneous">
    <text evidence="1">This protein may be expected to contain an N-terminal transit peptide but none has been predicted.</text>
</comment>
<comment type="similarity">
    <text evidence="1">Belongs to the GatC family.</text>
</comment>
<accession>B3RYZ0</accession>
<evidence type="ECO:0000255" key="1">
    <source>
        <dbReference type="HAMAP-Rule" id="MF_03149"/>
    </source>
</evidence>
<organism>
    <name type="scientific">Trichoplax adhaerens</name>
    <name type="common">Trichoplax reptans</name>
    <dbReference type="NCBI Taxonomy" id="10228"/>
    <lineage>
        <taxon>Eukaryota</taxon>
        <taxon>Metazoa</taxon>
        <taxon>Placozoa</taxon>
        <taxon>Uniplacotomia</taxon>
        <taxon>Trichoplacea</taxon>
        <taxon>Trichoplacidae</taxon>
        <taxon>Trichoplax</taxon>
    </lineage>
</organism>
<gene>
    <name type="ORF">TRIADDRAFT_57266</name>
</gene>
<name>GATC_TRIAD</name>
<keyword id="KW-0067">ATP-binding</keyword>
<keyword id="KW-0436">Ligase</keyword>
<keyword id="KW-0496">Mitochondrion</keyword>
<keyword id="KW-0547">Nucleotide-binding</keyword>
<keyword id="KW-0648">Protein biosynthesis</keyword>
<keyword id="KW-1185">Reference proteome</keyword>
<dbReference type="EC" id="6.3.5.-" evidence="1"/>
<dbReference type="EMBL" id="DS985246">
    <property type="protein sequence ID" value="EDV24110.1"/>
    <property type="molecule type" value="Genomic_DNA"/>
</dbReference>
<dbReference type="RefSeq" id="XP_002113636.1">
    <property type="nucleotide sequence ID" value="XM_002113600.1"/>
</dbReference>
<dbReference type="SMR" id="B3RYZ0"/>
<dbReference type="FunCoup" id="B3RYZ0">
    <property type="interactions" value="887"/>
</dbReference>
<dbReference type="STRING" id="10228.B3RYZ0"/>
<dbReference type="EnsemblMetazoa" id="TriadT57266">
    <property type="protein sequence ID" value="TriadP57266"/>
    <property type="gene ID" value="TriadG57266"/>
</dbReference>
<dbReference type="GeneID" id="6754849"/>
<dbReference type="KEGG" id="tad:TRIADDRAFT_57266"/>
<dbReference type="CTD" id="6754849"/>
<dbReference type="HOGENOM" id="CLU_1752071_0_0_1"/>
<dbReference type="InParanoid" id="B3RYZ0"/>
<dbReference type="OrthoDB" id="5394539at2759"/>
<dbReference type="PhylomeDB" id="B3RYZ0"/>
<dbReference type="Proteomes" id="UP000009022">
    <property type="component" value="Unassembled WGS sequence"/>
</dbReference>
<dbReference type="GO" id="GO:0030956">
    <property type="term" value="C:glutamyl-tRNA(Gln) amidotransferase complex"/>
    <property type="evidence" value="ECO:0000318"/>
    <property type="project" value="GO_Central"/>
</dbReference>
<dbReference type="GO" id="GO:0005739">
    <property type="term" value="C:mitochondrion"/>
    <property type="evidence" value="ECO:0000318"/>
    <property type="project" value="GO_Central"/>
</dbReference>
<dbReference type="GO" id="GO:0005524">
    <property type="term" value="F:ATP binding"/>
    <property type="evidence" value="ECO:0007669"/>
    <property type="project" value="UniProtKB-KW"/>
</dbReference>
<dbReference type="GO" id="GO:0050567">
    <property type="term" value="F:glutaminyl-tRNA synthase (glutamine-hydrolyzing) activity"/>
    <property type="evidence" value="ECO:0007669"/>
    <property type="project" value="UniProtKB-UniRule"/>
</dbReference>
<dbReference type="GO" id="GO:0070681">
    <property type="term" value="P:glutaminyl-tRNAGln biosynthesis via transamidation"/>
    <property type="evidence" value="ECO:0000318"/>
    <property type="project" value="GO_Central"/>
</dbReference>
<dbReference type="GO" id="GO:0032543">
    <property type="term" value="P:mitochondrial translation"/>
    <property type="evidence" value="ECO:0000318"/>
    <property type="project" value="GO_Central"/>
</dbReference>
<dbReference type="GO" id="GO:0006450">
    <property type="term" value="P:regulation of translational fidelity"/>
    <property type="evidence" value="ECO:0007669"/>
    <property type="project" value="InterPro"/>
</dbReference>
<dbReference type="HAMAP" id="MF_00122">
    <property type="entry name" value="GatC"/>
    <property type="match status" value="1"/>
</dbReference>
<dbReference type="InterPro" id="IPR036113">
    <property type="entry name" value="Asp/Glu-ADT_sf_sub_c"/>
</dbReference>
<dbReference type="InterPro" id="IPR003837">
    <property type="entry name" value="GatC"/>
</dbReference>
<dbReference type="PANTHER" id="PTHR15004">
    <property type="entry name" value="GLUTAMYL-TRNA(GLN) AMIDOTRANSFERASE SUBUNIT C, MITOCHONDRIAL"/>
    <property type="match status" value="1"/>
</dbReference>
<dbReference type="PANTHER" id="PTHR15004:SF0">
    <property type="entry name" value="GLUTAMYL-TRNA(GLN) AMIDOTRANSFERASE SUBUNIT C, MITOCHONDRIAL"/>
    <property type="match status" value="1"/>
</dbReference>
<dbReference type="Pfam" id="PF02686">
    <property type="entry name" value="GatC"/>
    <property type="match status" value="1"/>
</dbReference>
<dbReference type="SUPFAM" id="SSF141000">
    <property type="entry name" value="Glu-tRNAGln amidotransferase C subunit"/>
    <property type="match status" value="1"/>
</dbReference>